<sequence>MESSLKIKDIPQNERPKEKLLTYGAESLSNSELLAIIIRTGTQGENVLQLCSRLLSELEGLNGILDASFDDIISIKGIKQGKASQILALAELFKRFRTLKAINNDIKITSPKDLASLLMGEMNELNQEVLKVVLLNTKNIVVGIKDVFKGSLNTSVVHPREIFKQAISKNSASIIICHNHPSGDPTPSREDINITLRIKECGNIIGIQLVDHIIIGNNKFVSLKERGLI</sequence>
<comment type="similarity">
    <text evidence="2">Belongs to the UPF0758 family.</text>
</comment>
<accession>A6LQP8</accession>
<proteinExistence type="inferred from homology"/>
<feature type="chain" id="PRO_1000074141" description="UPF0758 protein Cbei_0490">
    <location>
        <begin position="1"/>
        <end position="229"/>
    </location>
</feature>
<feature type="domain" description="MPN" evidence="1">
    <location>
        <begin position="107"/>
        <end position="229"/>
    </location>
</feature>
<feature type="short sequence motif" description="JAMM motif" evidence="1">
    <location>
        <begin position="178"/>
        <end position="191"/>
    </location>
</feature>
<feature type="binding site" evidence="1">
    <location>
        <position position="178"/>
    </location>
    <ligand>
        <name>Zn(2+)</name>
        <dbReference type="ChEBI" id="CHEBI:29105"/>
        <note>catalytic</note>
    </ligand>
</feature>
<feature type="binding site" evidence="1">
    <location>
        <position position="180"/>
    </location>
    <ligand>
        <name>Zn(2+)</name>
        <dbReference type="ChEBI" id="CHEBI:29105"/>
        <note>catalytic</note>
    </ligand>
</feature>
<feature type="binding site" evidence="1">
    <location>
        <position position="191"/>
    </location>
    <ligand>
        <name>Zn(2+)</name>
        <dbReference type="ChEBI" id="CHEBI:29105"/>
        <note>catalytic</note>
    </ligand>
</feature>
<organism>
    <name type="scientific">Clostridium beijerinckii (strain ATCC 51743 / NCIMB 8052)</name>
    <name type="common">Clostridium acetobutylicum</name>
    <dbReference type="NCBI Taxonomy" id="290402"/>
    <lineage>
        <taxon>Bacteria</taxon>
        <taxon>Bacillati</taxon>
        <taxon>Bacillota</taxon>
        <taxon>Clostridia</taxon>
        <taxon>Eubacteriales</taxon>
        <taxon>Clostridiaceae</taxon>
        <taxon>Clostridium</taxon>
    </lineage>
</organism>
<keyword id="KW-0378">Hydrolase</keyword>
<keyword id="KW-0479">Metal-binding</keyword>
<keyword id="KW-0482">Metalloprotease</keyword>
<keyword id="KW-0645">Protease</keyword>
<keyword id="KW-0862">Zinc</keyword>
<name>Y490_CLOB8</name>
<gene>
    <name type="ordered locus">Cbei_0490</name>
</gene>
<reference key="1">
    <citation type="submission" date="2007-06" db="EMBL/GenBank/DDBJ databases">
        <title>Complete sequence of Clostridium beijerinckii NCIMB 8052.</title>
        <authorList>
            <consortium name="US DOE Joint Genome Institute"/>
            <person name="Copeland A."/>
            <person name="Lucas S."/>
            <person name="Lapidus A."/>
            <person name="Barry K."/>
            <person name="Detter J.C."/>
            <person name="Glavina del Rio T."/>
            <person name="Hammon N."/>
            <person name="Israni S."/>
            <person name="Dalin E."/>
            <person name="Tice H."/>
            <person name="Pitluck S."/>
            <person name="Sims D."/>
            <person name="Brettin T."/>
            <person name="Bruce D."/>
            <person name="Tapia R."/>
            <person name="Brainard J."/>
            <person name="Schmutz J."/>
            <person name="Larimer F."/>
            <person name="Land M."/>
            <person name="Hauser L."/>
            <person name="Kyrpides N."/>
            <person name="Mikhailova N."/>
            <person name="Bennet G."/>
            <person name="Cann I."/>
            <person name="Chen J.-S."/>
            <person name="Contreras A.L."/>
            <person name="Jones D."/>
            <person name="Kashket E."/>
            <person name="Mitchell W."/>
            <person name="Stoddard S."/>
            <person name="Schwarz W."/>
            <person name="Qureshi N."/>
            <person name="Young M."/>
            <person name="Shi Z."/>
            <person name="Ezeji T."/>
            <person name="White B."/>
            <person name="Blaschek H."/>
            <person name="Richardson P."/>
        </authorList>
    </citation>
    <scope>NUCLEOTIDE SEQUENCE [LARGE SCALE GENOMIC DNA]</scope>
    <source>
        <strain>ATCC 51743 / NCIMB 8052</strain>
    </source>
</reference>
<evidence type="ECO:0000255" key="1">
    <source>
        <dbReference type="PROSITE-ProRule" id="PRU01182"/>
    </source>
</evidence>
<evidence type="ECO:0000305" key="2"/>
<protein>
    <recommendedName>
        <fullName>UPF0758 protein Cbei_0490</fullName>
    </recommendedName>
</protein>
<dbReference type="EMBL" id="CP000721">
    <property type="protein sequence ID" value="ABR32678.1"/>
    <property type="molecule type" value="Genomic_DNA"/>
</dbReference>
<dbReference type="RefSeq" id="WP_011967839.1">
    <property type="nucleotide sequence ID" value="NC_009617.1"/>
</dbReference>
<dbReference type="SMR" id="A6LQP8"/>
<dbReference type="KEGG" id="cbe:Cbei_0490"/>
<dbReference type="eggNOG" id="COG2003">
    <property type="taxonomic scope" value="Bacteria"/>
</dbReference>
<dbReference type="HOGENOM" id="CLU_073529_0_2_9"/>
<dbReference type="Proteomes" id="UP000000565">
    <property type="component" value="Chromosome"/>
</dbReference>
<dbReference type="GO" id="GO:0046872">
    <property type="term" value="F:metal ion binding"/>
    <property type="evidence" value="ECO:0007669"/>
    <property type="project" value="UniProtKB-KW"/>
</dbReference>
<dbReference type="GO" id="GO:0008237">
    <property type="term" value="F:metallopeptidase activity"/>
    <property type="evidence" value="ECO:0007669"/>
    <property type="project" value="UniProtKB-KW"/>
</dbReference>
<dbReference type="GO" id="GO:0006508">
    <property type="term" value="P:proteolysis"/>
    <property type="evidence" value="ECO:0007669"/>
    <property type="project" value="UniProtKB-KW"/>
</dbReference>
<dbReference type="CDD" id="cd08071">
    <property type="entry name" value="MPN_DUF2466"/>
    <property type="match status" value="1"/>
</dbReference>
<dbReference type="Gene3D" id="3.40.140.10">
    <property type="entry name" value="Cytidine Deaminase, domain 2"/>
    <property type="match status" value="1"/>
</dbReference>
<dbReference type="InterPro" id="IPR037518">
    <property type="entry name" value="MPN"/>
</dbReference>
<dbReference type="InterPro" id="IPR025657">
    <property type="entry name" value="RadC_JAB"/>
</dbReference>
<dbReference type="InterPro" id="IPR001405">
    <property type="entry name" value="UPF0758"/>
</dbReference>
<dbReference type="InterPro" id="IPR020891">
    <property type="entry name" value="UPF0758_CS"/>
</dbReference>
<dbReference type="InterPro" id="IPR046778">
    <property type="entry name" value="UPF0758_N"/>
</dbReference>
<dbReference type="NCBIfam" id="NF000642">
    <property type="entry name" value="PRK00024.1"/>
    <property type="match status" value="1"/>
</dbReference>
<dbReference type="NCBIfam" id="TIGR00608">
    <property type="entry name" value="radc"/>
    <property type="match status" value="1"/>
</dbReference>
<dbReference type="PANTHER" id="PTHR30471">
    <property type="entry name" value="DNA REPAIR PROTEIN RADC"/>
    <property type="match status" value="1"/>
</dbReference>
<dbReference type="PANTHER" id="PTHR30471:SF3">
    <property type="entry name" value="UPF0758 PROTEIN YEES-RELATED"/>
    <property type="match status" value="1"/>
</dbReference>
<dbReference type="Pfam" id="PF04002">
    <property type="entry name" value="RadC"/>
    <property type="match status" value="1"/>
</dbReference>
<dbReference type="Pfam" id="PF20582">
    <property type="entry name" value="UPF0758_N"/>
    <property type="match status" value="1"/>
</dbReference>
<dbReference type="SUPFAM" id="SSF102712">
    <property type="entry name" value="JAB1/MPN domain"/>
    <property type="match status" value="1"/>
</dbReference>
<dbReference type="PROSITE" id="PS50249">
    <property type="entry name" value="MPN"/>
    <property type="match status" value="1"/>
</dbReference>
<dbReference type="PROSITE" id="PS01302">
    <property type="entry name" value="UPF0758"/>
    <property type="match status" value="1"/>
</dbReference>